<feature type="chain" id="PRO_1000200283" description="Xylose isomerase">
    <location>
        <begin position="1"/>
        <end position="440"/>
    </location>
</feature>
<feature type="active site" evidence="1">
    <location>
        <position position="100"/>
    </location>
</feature>
<feature type="active site" evidence="1">
    <location>
        <position position="103"/>
    </location>
</feature>
<feature type="binding site" evidence="1">
    <location>
        <position position="231"/>
    </location>
    <ligand>
        <name>Mg(2+)</name>
        <dbReference type="ChEBI" id="CHEBI:18420"/>
        <label>1</label>
    </ligand>
</feature>
<feature type="binding site" evidence="1">
    <location>
        <position position="267"/>
    </location>
    <ligand>
        <name>Mg(2+)</name>
        <dbReference type="ChEBI" id="CHEBI:18420"/>
        <label>1</label>
    </ligand>
</feature>
<feature type="binding site" evidence="1">
    <location>
        <position position="267"/>
    </location>
    <ligand>
        <name>Mg(2+)</name>
        <dbReference type="ChEBI" id="CHEBI:18420"/>
        <label>2</label>
    </ligand>
</feature>
<feature type="binding site" evidence="1">
    <location>
        <position position="270"/>
    </location>
    <ligand>
        <name>Mg(2+)</name>
        <dbReference type="ChEBI" id="CHEBI:18420"/>
        <label>2</label>
    </ligand>
</feature>
<feature type="binding site" evidence="1">
    <location>
        <position position="295"/>
    </location>
    <ligand>
        <name>Mg(2+)</name>
        <dbReference type="ChEBI" id="CHEBI:18420"/>
        <label>1</label>
    </ligand>
</feature>
<feature type="binding site" evidence="1">
    <location>
        <position position="306"/>
    </location>
    <ligand>
        <name>Mg(2+)</name>
        <dbReference type="ChEBI" id="CHEBI:18420"/>
        <label>2</label>
    </ligand>
</feature>
<feature type="binding site" evidence="1">
    <location>
        <position position="308"/>
    </location>
    <ligand>
        <name>Mg(2+)</name>
        <dbReference type="ChEBI" id="CHEBI:18420"/>
        <label>2</label>
    </ligand>
</feature>
<feature type="binding site" evidence="1">
    <location>
        <position position="338"/>
    </location>
    <ligand>
        <name>Mg(2+)</name>
        <dbReference type="ChEBI" id="CHEBI:18420"/>
        <label>1</label>
    </ligand>
</feature>
<dbReference type="EC" id="5.3.1.5" evidence="1"/>
<dbReference type="EMBL" id="AM747722">
    <property type="protein sequence ID" value="CAR57287.1"/>
    <property type="molecule type" value="Genomic_DNA"/>
</dbReference>
<dbReference type="RefSeq" id="WP_006483287.1">
    <property type="nucleotide sequence ID" value="NC_011002.1"/>
</dbReference>
<dbReference type="SMR" id="B4ENA5"/>
<dbReference type="GeneID" id="56560196"/>
<dbReference type="KEGG" id="bcj:BCAS0355"/>
<dbReference type="eggNOG" id="COG2115">
    <property type="taxonomic scope" value="Bacteria"/>
</dbReference>
<dbReference type="HOGENOM" id="CLU_037261_1_0_4"/>
<dbReference type="BioCyc" id="BCEN216591:G1G1V-7350-MONOMER"/>
<dbReference type="Proteomes" id="UP000001035">
    <property type="component" value="Chromosome 3"/>
</dbReference>
<dbReference type="GO" id="GO:0005737">
    <property type="term" value="C:cytoplasm"/>
    <property type="evidence" value="ECO:0007669"/>
    <property type="project" value="UniProtKB-SubCell"/>
</dbReference>
<dbReference type="GO" id="GO:0000287">
    <property type="term" value="F:magnesium ion binding"/>
    <property type="evidence" value="ECO:0007669"/>
    <property type="project" value="UniProtKB-UniRule"/>
</dbReference>
<dbReference type="GO" id="GO:0009045">
    <property type="term" value="F:xylose isomerase activity"/>
    <property type="evidence" value="ECO:0007669"/>
    <property type="project" value="UniProtKB-UniRule"/>
</dbReference>
<dbReference type="GO" id="GO:0042732">
    <property type="term" value="P:D-xylose metabolic process"/>
    <property type="evidence" value="ECO:0007669"/>
    <property type="project" value="UniProtKB-UniRule"/>
</dbReference>
<dbReference type="FunFam" id="3.20.20.150:FF:000002">
    <property type="entry name" value="Xylose isomerase"/>
    <property type="match status" value="1"/>
</dbReference>
<dbReference type="Gene3D" id="3.20.20.150">
    <property type="entry name" value="Divalent-metal-dependent TIM barrel enzymes"/>
    <property type="match status" value="1"/>
</dbReference>
<dbReference type="HAMAP" id="MF_00455">
    <property type="entry name" value="Xylose_isom_A"/>
    <property type="match status" value="1"/>
</dbReference>
<dbReference type="InterPro" id="IPR036237">
    <property type="entry name" value="Xyl_isomerase-like_sf"/>
</dbReference>
<dbReference type="InterPro" id="IPR013452">
    <property type="entry name" value="Xylose_isom_bac"/>
</dbReference>
<dbReference type="InterPro" id="IPR001998">
    <property type="entry name" value="Xylose_isomerase"/>
</dbReference>
<dbReference type="NCBIfam" id="NF003998">
    <property type="entry name" value="PRK05474.1"/>
    <property type="match status" value="1"/>
</dbReference>
<dbReference type="NCBIfam" id="TIGR02630">
    <property type="entry name" value="xylose_isom_A"/>
    <property type="match status" value="1"/>
</dbReference>
<dbReference type="PANTHER" id="PTHR48408">
    <property type="match status" value="1"/>
</dbReference>
<dbReference type="PANTHER" id="PTHR48408:SF1">
    <property type="entry name" value="XYLOSE ISOMERASE"/>
    <property type="match status" value="1"/>
</dbReference>
<dbReference type="PRINTS" id="PR00688">
    <property type="entry name" value="XYLOSISMRASE"/>
</dbReference>
<dbReference type="SUPFAM" id="SSF51658">
    <property type="entry name" value="Xylose isomerase-like"/>
    <property type="match status" value="1"/>
</dbReference>
<dbReference type="PROSITE" id="PS51415">
    <property type="entry name" value="XYLOSE_ISOMERASE"/>
    <property type="match status" value="1"/>
</dbReference>
<sequence>MSYFEHIPAIRYEGPQSDNPLAYHHYDPDKRVLGKTLAEHLRIAVCYWHTFVWPGHDIFGQAAFRRPWQQPGDALERARMKADAAFEFFTKLGTPFYTFHDTDVAPEGDSLREYAANFARMVDYLGERQQASGVRLLWGTANLFSHPRFAAGAATNPNPDVFAWAATQVCHALDATHRLGGENYVLWGGREGYETLLNTDLKRERDQFARFLSMVVEHKHRIGFKGALLIEPKPQEPTKHQYDYDVATVHGFLVQYGLQNEIRVNIEANHATLAGHSFHHEIANAFALGVFGSVDANRGDPQNGWDTDQFPNSVEELTLAFYEILRHGGFTTGGMNFDAKVRRQSIDPEDLFYGHVGAIDVLALALERAAVLVENDRLDALRRQRYAQWDDAFGRKILAGGYTLESLAADALARGVDPQHASGAQERLENIVNQAIYGLR</sequence>
<evidence type="ECO:0000255" key="1">
    <source>
        <dbReference type="HAMAP-Rule" id="MF_00455"/>
    </source>
</evidence>
<accession>B4ENA5</accession>
<gene>
    <name evidence="1" type="primary">xylA</name>
    <name type="ordered locus">BceJ2315_66270</name>
    <name type="ORF">BCAS0355</name>
</gene>
<keyword id="KW-0119">Carbohydrate metabolism</keyword>
<keyword id="KW-0963">Cytoplasm</keyword>
<keyword id="KW-0413">Isomerase</keyword>
<keyword id="KW-0460">Magnesium</keyword>
<keyword id="KW-0479">Metal-binding</keyword>
<keyword id="KW-0859">Xylose metabolism</keyword>
<protein>
    <recommendedName>
        <fullName evidence="1">Xylose isomerase</fullName>
        <ecNumber evidence="1">5.3.1.5</ecNumber>
    </recommendedName>
</protein>
<reference key="1">
    <citation type="journal article" date="2009" name="J. Bacteriol.">
        <title>The genome of Burkholderia cenocepacia J2315, an epidemic pathogen of cystic fibrosis patients.</title>
        <authorList>
            <person name="Holden M.T."/>
            <person name="Seth-Smith H.M."/>
            <person name="Crossman L.C."/>
            <person name="Sebaihia M."/>
            <person name="Bentley S.D."/>
            <person name="Cerdeno-Tarraga A.M."/>
            <person name="Thomson N.R."/>
            <person name="Bason N."/>
            <person name="Quail M.A."/>
            <person name="Sharp S."/>
            <person name="Cherevach I."/>
            <person name="Churcher C."/>
            <person name="Goodhead I."/>
            <person name="Hauser H."/>
            <person name="Holroyd N."/>
            <person name="Mungall K."/>
            <person name="Scott P."/>
            <person name="Walker D."/>
            <person name="White B."/>
            <person name="Rose H."/>
            <person name="Iversen P."/>
            <person name="Mil-Homens D."/>
            <person name="Rocha E.P."/>
            <person name="Fialho A.M."/>
            <person name="Baldwin A."/>
            <person name="Dowson C."/>
            <person name="Barrell B.G."/>
            <person name="Govan J.R."/>
            <person name="Vandamme P."/>
            <person name="Hart C.A."/>
            <person name="Mahenthiralingam E."/>
            <person name="Parkhill J."/>
        </authorList>
    </citation>
    <scope>NUCLEOTIDE SEQUENCE [LARGE SCALE GENOMIC DNA]</scope>
    <source>
        <strain>ATCC BAA-245 / DSM 16553 / LMG 16656 / NCTC 13227 / J2315 / CF5610</strain>
    </source>
</reference>
<name>XYLA_BURCJ</name>
<proteinExistence type="inferred from homology"/>
<organism>
    <name type="scientific">Burkholderia cenocepacia (strain ATCC BAA-245 / DSM 16553 / LMG 16656 / NCTC 13227 / J2315 / CF5610)</name>
    <name type="common">Burkholderia cepacia (strain J2315)</name>
    <dbReference type="NCBI Taxonomy" id="216591"/>
    <lineage>
        <taxon>Bacteria</taxon>
        <taxon>Pseudomonadati</taxon>
        <taxon>Pseudomonadota</taxon>
        <taxon>Betaproteobacteria</taxon>
        <taxon>Burkholderiales</taxon>
        <taxon>Burkholderiaceae</taxon>
        <taxon>Burkholderia</taxon>
        <taxon>Burkholderia cepacia complex</taxon>
    </lineage>
</organism>
<comment type="catalytic activity">
    <reaction evidence="1">
        <text>alpha-D-xylose = alpha-D-xylulofuranose</text>
        <dbReference type="Rhea" id="RHEA:22816"/>
        <dbReference type="ChEBI" id="CHEBI:28518"/>
        <dbReference type="ChEBI" id="CHEBI:188998"/>
        <dbReference type="EC" id="5.3.1.5"/>
    </reaction>
</comment>
<comment type="cofactor">
    <cofactor evidence="1">
        <name>Mg(2+)</name>
        <dbReference type="ChEBI" id="CHEBI:18420"/>
    </cofactor>
    <text evidence="1">Binds 2 magnesium ions per subunit.</text>
</comment>
<comment type="subunit">
    <text evidence="1">Homotetramer.</text>
</comment>
<comment type="subcellular location">
    <subcellularLocation>
        <location evidence="1">Cytoplasm</location>
    </subcellularLocation>
</comment>
<comment type="similarity">
    <text evidence="1">Belongs to the xylose isomerase family.</text>
</comment>